<keyword id="KW-0963">Cytoplasm</keyword>
<keyword id="KW-0539">Nucleus</keyword>
<keyword id="KW-0597">Phosphoprotein</keyword>
<keyword id="KW-1185">Reference proteome</keyword>
<sequence length="125" mass="14320">MRLLTHNLLSSHVRGVGPRGFPLRLQATEVRINPVEFNPDFIVRMIPKVEWAALLEAADHLHLIQVPKEPIQGYEHNEEFLRKMHHVLLEVEVLEGTLQCPESGRVFPISRGIPNMLLSDEETET</sequence>
<name>TR112_BOVIN</name>
<reference key="1">
    <citation type="submission" date="2006-01" db="EMBL/GenBank/DDBJ databases">
        <authorList>
            <consortium name="NIH - Mammalian Gene Collection (MGC) project"/>
        </authorList>
    </citation>
    <scope>NUCLEOTIDE SEQUENCE [LARGE SCALE MRNA]</scope>
    <source>
        <strain>Hereford</strain>
        <tissue>Hypothalamus</tissue>
    </source>
</reference>
<comment type="function">
    <text evidence="1">Acts as an activator of both rRNA/tRNA and protein methyltransferases. Together with methyltransferase BUD23, methylates the N(7) position of a guanine in 18S rRNA. The heterodimer with HEMK2/N6AMT1 catalyzes N5-methylation of ETF1 on 'Gln-185', using S-adenosyl L-methionine as methyl donor. The heterodimer with ALKBH8 catalyzes the methylation of 5-carboxymethyl uridine to 5-methylcarboxymethyl uridine at the wobble position of the anticodon loop in target tRNA species. Together with methyltransferase THUMPD3, catalyzes the formation of N(2)-methylguanosine at position 6 in a broad range of tRNA substrates and at position 7 of tRNA(Trp) (By similarity). Involved in the pre-rRNA processing steps leading to small-subunit rRNA production. Together with methyltransferase METTL5, specifically methylates the 6th position of adenine in position 1832 of 18S rRNA.</text>
</comment>
<comment type="subunit">
    <text evidence="1">Part of the heterodimeric BUD23-TRM112 methyltransferase complex; this heterodimerization is necessary for the metabolic stability and activity of the catalytic subunit BUD23. Part of the heterodimeric N6AMT1-TRM112 methyltransferase complex; this heterodimerization is necessary for S-adenosyl-L-methionine-binding to N6AMT1/HEMK2. Part of the heterodimeric ALKBH8-TRM112 methyltransferase complex. Part of the heterodimeric METTL5-TRM112 methyltransferase complex; this heterodimerization is necessary for the stability of the catalytic subunit METTL5. Part of the heterodimeric THUMPD3-TRM112 methyltransferase complex; this complex forms an active tRNA methyltransferase, where TRMT112 acts as an activator of the catalytic subunit THUMPD3. Part of the heterodimeric THUMPD2-TRM112 methyltransferase complex; this complex forms an active tRNA methyltransferase, where TRMT112 acts as an activator of the catalytic subunit THUMPD2. Part of the heterodimeric TRMT11-TRM112 methyltransferase complex; this complex forms an active tRNA methyltransferase, where TRMT112 acts as an activator of the catalytic subunit TRMT11.</text>
</comment>
<comment type="subcellular location">
    <subcellularLocation>
        <location evidence="1">Nucleus</location>
        <location evidence="1">Nucleoplasm</location>
    </subcellularLocation>
    <subcellularLocation>
        <location evidence="1">Cytoplasm</location>
        <location evidence="1">Perinuclear region</location>
    </subcellularLocation>
    <text evidence="1">Localizes to a polarized perinuclear structure, overlapping partially with the Golgi and lysosomes.</text>
</comment>
<comment type="similarity">
    <text evidence="2">Belongs to the TRM112 family.</text>
</comment>
<dbReference type="EMBL" id="BC112713">
    <property type="protein sequence ID" value="AAI12714.1"/>
    <property type="molecule type" value="mRNA"/>
</dbReference>
<dbReference type="RefSeq" id="NP_001039446.1">
    <property type="nucleotide sequence ID" value="NM_001045981.2"/>
</dbReference>
<dbReference type="SMR" id="Q2KIA2"/>
<dbReference type="FunCoup" id="Q2KIA2">
    <property type="interactions" value="2844"/>
</dbReference>
<dbReference type="STRING" id="9913.ENSBTAP00000011401"/>
<dbReference type="PaxDb" id="9913-ENSBTAP00000011401"/>
<dbReference type="GeneID" id="507833"/>
<dbReference type="KEGG" id="bta:507833"/>
<dbReference type="CTD" id="51504"/>
<dbReference type="VEuPathDB" id="HostDB:ENSBTAG00000008646"/>
<dbReference type="eggNOG" id="KOG1088">
    <property type="taxonomic scope" value="Eukaryota"/>
</dbReference>
<dbReference type="HOGENOM" id="CLU_086140_2_0_1"/>
<dbReference type="InParanoid" id="Q2KIA2"/>
<dbReference type="OMA" id="NMLTSKC"/>
<dbReference type="OrthoDB" id="2187549at2759"/>
<dbReference type="TreeFam" id="TF313256"/>
<dbReference type="Reactome" id="R-BTA-156581">
    <property type="pathway name" value="Methylation"/>
</dbReference>
<dbReference type="Reactome" id="R-BTA-72764">
    <property type="pathway name" value="Eukaryotic Translation Termination"/>
</dbReference>
<dbReference type="Proteomes" id="UP000009136">
    <property type="component" value="Chromosome 29"/>
</dbReference>
<dbReference type="Bgee" id="ENSBTAG00000008646">
    <property type="expression patterns" value="Expressed in oocyte and 106 other cell types or tissues"/>
</dbReference>
<dbReference type="GO" id="GO:0005737">
    <property type="term" value="C:cytoplasm"/>
    <property type="evidence" value="ECO:0000318"/>
    <property type="project" value="GO_Central"/>
</dbReference>
<dbReference type="GO" id="GO:0005654">
    <property type="term" value="C:nucleoplasm"/>
    <property type="evidence" value="ECO:0000250"/>
    <property type="project" value="UniProtKB"/>
</dbReference>
<dbReference type="GO" id="GO:0005634">
    <property type="term" value="C:nucleus"/>
    <property type="evidence" value="ECO:0000318"/>
    <property type="project" value="GO_Central"/>
</dbReference>
<dbReference type="GO" id="GO:0048471">
    <property type="term" value="C:perinuclear region of cytoplasm"/>
    <property type="evidence" value="ECO:0000250"/>
    <property type="project" value="UniProtKB"/>
</dbReference>
<dbReference type="GO" id="GO:0043528">
    <property type="term" value="C:tRNA (m2G10) methyltransferase complex"/>
    <property type="evidence" value="ECO:0000318"/>
    <property type="project" value="GO_Central"/>
</dbReference>
<dbReference type="GO" id="GO:0046982">
    <property type="term" value="F:protein heterodimerization activity"/>
    <property type="evidence" value="ECO:0000250"/>
    <property type="project" value="UniProtKB"/>
</dbReference>
<dbReference type="GO" id="GO:0141106">
    <property type="term" value="F:tRNA methyltransferase activator activity"/>
    <property type="evidence" value="ECO:0000318"/>
    <property type="project" value="GO_Central"/>
</dbReference>
<dbReference type="GO" id="GO:0000470">
    <property type="term" value="P:maturation of LSU-rRNA"/>
    <property type="evidence" value="ECO:0000318"/>
    <property type="project" value="GO_Central"/>
</dbReference>
<dbReference type="GO" id="GO:0030490">
    <property type="term" value="P:maturation of SSU-rRNA"/>
    <property type="evidence" value="ECO:0000318"/>
    <property type="project" value="GO_Central"/>
</dbReference>
<dbReference type="GO" id="GO:0018364">
    <property type="term" value="P:peptidyl-glutamine methylation"/>
    <property type="evidence" value="ECO:0000250"/>
    <property type="project" value="UniProtKB"/>
</dbReference>
<dbReference type="GO" id="GO:2000234">
    <property type="term" value="P:positive regulation of rRNA processing"/>
    <property type="evidence" value="ECO:0000250"/>
    <property type="project" value="UniProtKB"/>
</dbReference>
<dbReference type="GO" id="GO:0070476">
    <property type="term" value="P:rRNA (guanine-N7)-methylation"/>
    <property type="evidence" value="ECO:0000250"/>
    <property type="project" value="UniProtKB"/>
</dbReference>
<dbReference type="GO" id="GO:0031167">
    <property type="term" value="P:rRNA methylation"/>
    <property type="evidence" value="ECO:0000250"/>
    <property type="project" value="UniProtKB"/>
</dbReference>
<dbReference type="GO" id="GO:0045815">
    <property type="term" value="P:transcription initiation-coupled chromatin remodeling"/>
    <property type="evidence" value="ECO:0000250"/>
    <property type="project" value="UniProtKB"/>
</dbReference>
<dbReference type="CDD" id="cd21089">
    <property type="entry name" value="Trm112-like"/>
    <property type="match status" value="1"/>
</dbReference>
<dbReference type="FunFam" id="2.20.25.10:FF:000015">
    <property type="entry name" value="Multifunctional methyltransferase subunit TRM112-like protein"/>
    <property type="match status" value="1"/>
</dbReference>
<dbReference type="Gene3D" id="2.20.25.10">
    <property type="match status" value="1"/>
</dbReference>
<dbReference type="InterPro" id="IPR039127">
    <property type="entry name" value="Trm112"/>
</dbReference>
<dbReference type="InterPro" id="IPR005651">
    <property type="entry name" value="Trm112-like"/>
</dbReference>
<dbReference type="PANTHER" id="PTHR12773:SF0">
    <property type="entry name" value="MULTIFUNCTIONAL METHYLTRANSFERASE SUBUNIT TRM112-LIKE PROTEIN"/>
    <property type="match status" value="1"/>
</dbReference>
<dbReference type="PANTHER" id="PTHR12773">
    <property type="entry name" value="UPF0315 PROTEIN-RELATED"/>
    <property type="match status" value="1"/>
</dbReference>
<dbReference type="Pfam" id="PF03966">
    <property type="entry name" value="Trm112p"/>
    <property type="match status" value="1"/>
</dbReference>
<dbReference type="SUPFAM" id="SSF158997">
    <property type="entry name" value="Trm112p-like"/>
    <property type="match status" value="1"/>
</dbReference>
<proteinExistence type="evidence at transcript level"/>
<organism>
    <name type="scientific">Bos taurus</name>
    <name type="common">Bovine</name>
    <dbReference type="NCBI Taxonomy" id="9913"/>
    <lineage>
        <taxon>Eukaryota</taxon>
        <taxon>Metazoa</taxon>
        <taxon>Chordata</taxon>
        <taxon>Craniata</taxon>
        <taxon>Vertebrata</taxon>
        <taxon>Euteleostomi</taxon>
        <taxon>Mammalia</taxon>
        <taxon>Eutheria</taxon>
        <taxon>Laurasiatheria</taxon>
        <taxon>Artiodactyla</taxon>
        <taxon>Ruminantia</taxon>
        <taxon>Pecora</taxon>
        <taxon>Bovidae</taxon>
        <taxon>Bovinae</taxon>
        <taxon>Bos</taxon>
    </lineage>
</organism>
<accession>Q2KIA2</accession>
<protein>
    <recommendedName>
        <fullName>Multifunctional methyltransferase subunit TRM112-like protein</fullName>
    </recommendedName>
    <alternativeName>
        <fullName>tRNA methyltransferase 112 homolog</fullName>
    </alternativeName>
</protein>
<evidence type="ECO:0000250" key="1">
    <source>
        <dbReference type="UniProtKB" id="Q9UI30"/>
    </source>
</evidence>
<evidence type="ECO:0000305" key="2"/>
<feature type="chain" id="PRO_0000247891" description="Multifunctional methyltransferase subunit TRM112-like protein">
    <location>
        <begin position="1"/>
        <end position="125"/>
    </location>
</feature>
<feature type="domain" description="TRM112">
    <location>
        <begin position="2"/>
        <end position="119"/>
    </location>
</feature>
<feature type="modified residue" description="Phosphoserine" evidence="1">
    <location>
        <position position="119"/>
    </location>
</feature>
<gene>
    <name type="primary">TRMT112</name>
</gene>